<gene>
    <name evidence="1" type="primary">rplU</name>
    <name type="ordered locus">Tlet_1979</name>
</gene>
<evidence type="ECO:0000255" key="1">
    <source>
        <dbReference type="HAMAP-Rule" id="MF_01363"/>
    </source>
</evidence>
<evidence type="ECO:0000305" key="2"/>
<name>RL21_PSELT</name>
<feature type="chain" id="PRO_1000067911" description="Large ribosomal subunit protein bL21">
    <location>
        <begin position="1"/>
        <end position="107"/>
    </location>
</feature>
<dbReference type="EMBL" id="CP000812">
    <property type="protein sequence ID" value="ABV34533.1"/>
    <property type="molecule type" value="Genomic_DNA"/>
</dbReference>
<dbReference type="RefSeq" id="WP_012004009.1">
    <property type="nucleotide sequence ID" value="NZ_BSDV01000001.1"/>
</dbReference>
<dbReference type="SMR" id="A8F8P9"/>
<dbReference type="STRING" id="416591.Tlet_1979"/>
<dbReference type="KEGG" id="tle:Tlet_1979"/>
<dbReference type="eggNOG" id="COG0261">
    <property type="taxonomic scope" value="Bacteria"/>
</dbReference>
<dbReference type="HOGENOM" id="CLU_061463_3_2_0"/>
<dbReference type="OrthoDB" id="9813334at2"/>
<dbReference type="Proteomes" id="UP000002016">
    <property type="component" value="Chromosome"/>
</dbReference>
<dbReference type="GO" id="GO:0005737">
    <property type="term" value="C:cytoplasm"/>
    <property type="evidence" value="ECO:0007669"/>
    <property type="project" value="UniProtKB-ARBA"/>
</dbReference>
<dbReference type="GO" id="GO:1990904">
    <property type="term" value="C:ribonucleoprotein complex"/>
    <property type="evidence" value="ECO:0007669"/>
    <property type="project" value="UniProtKB-KW"/>
</dbReference>
<dbReference type="GO" id="GO:0005840">
    <property type="term" value="C:ribosome"/>
    <property type="evidence" value="ECO:0007669"/>
    <property type="project" value="UniProtKB-KW"/>
</dbReference>
<dbReference type="GO" id="GO:0019843">
    <property type="term" value="F:rRNA binding"/>
    <property type="evidence" value="ECO:0007669"/>
    <property type="project" value="UniProtKB-UniRule"/>
</dbReference>
<dbReference type="GO" id="GO:0003735">
    <property type="term" value="F:structural constituent of ribosome"/>
    <property type="evidence" value="ECO:0007669"/>
    <property type="project" value="InterPro"/>
</dbReference>
<dbReference type="GO" id="GO:0006412">
    <property type="term" value="P:translation"/>
    <property type="evidence" value="ECO:0007669"/>
    <property type="project" value="UniProtKB-UniRule"/>
</dbReference>
<dbReference type="HAMAP" id="MF_01363">
    <property type="entry name" value="Ribosomal_bL21"/>
    <property type="match status" value="1"/>
</dbReference>
<dbReference type="InterPro" id="IPR028909">
    <property type="entry name" value="bL21-like"/>
</dbReference>
<dbReference type="InterPro" id="IPR036164">
    <property type="entry name" value="bL21-like_sf"/>
</dbReference>
<dbReference type="InterPro" id="IPR001787">
    <property type="entry name" value="Ribosomal_bL21"/>
</dbReference>
<dbReference type="InterPro" id="IPR018258">
    <property type="entry name" value="Ribosomal_bL21_CS"/>
</dbReference>
<dbReference type="NCBIfam" id="TIGR00061">
    <property type="entry name" value="L21"/>
    <property type="match status" value="1"/>
</dbReference>
<dbReference type="PANTHER" id="PTHR21349">
    <property type="entry name" value="50S RIBOSOMAL PROTEIN L21"/>
    <property type="match status" value="1"/>
</dbReference>
<dbReference type="PANTHER" id="PTHR21349:SF0">
    <property type="entry name" value="LARGE RIBOSOMAL SUBUNIT PROTEIN BL21M"/>
    <property type="match status" value="1"/>
</dbReference>
<dbReference type="Pfam" id="PF00829">
    <property type="entry name" value="Ribosomal_L21p"/>
    <property type="match status" value="1"/>
</dbReference>
<dbReference type="SUPFAM" id="SSF141091">
    <property type="entry name" value="L21p-like"/>
    <property type="match status" value="1"/>
</dbReference>
<dbReference type="PROSITE" id="PS01169">
    <property type="entry name" value="RIBOSOMAL_L21"/>
    <property type="match status" value="1"/>
</dbReference>
<keyword id="KW-1185">Reference proteome</keyword>
<keyword id="KW-0687">Ribonucleoprotein</keyword>
<keyword id="KW-0689">Ribosomal protein</keyword>
<keyword id="KW-0694">RNA-binding</keyword>
<keyword id="KW-0699">rRNA-binding</keyword>
<sequence length="107" mass="12319">MYAIIETGGKQYKVSEGDTIAVEKLSVKQGEQIVFERILHLSTDGTVKIGQPYVEGCTVKGTVLSHERARKVVVVKYRPRKNYRRERGHRQWFSLVKIDKIEIEKTS</sequence>
<organism>
    <name type="scientific">Pseudothermotoga lettingae (strain ATCC BAA-301 / DSM 14385 / NBRC 107922 / TMO)</name>
    <name type="common">Thermotoga lettingae</name>
    <dbReference type="NCBI Taxonomy" id="416591"/>
    <lineage>
        <taxon>Bacteria</taxon>
        <taxon>Thermotogati</taxon>
        <taxon>Thermotogota</taxon>
        <taxon>Thermotogae</taxon>
        <taxon>Thermotogales</taxon>
        <taxon>Thermotogaceae</taxon>
        <taxon>Pseudothermotoga</taxon>
    </lineage>
</organism>
<protein>
    <recommendedName>
        <fullName evidence="1">Large ribosomal subunit protein bL21</fullName>
    </recommendedName>
    <alternativeName>
        <fullName evidence="2">50S ribosomal protein L21</fullName>
    </alternativeName>
</protein>
<proteinExistence type="inferred from homology"/>
<comment type="function">
    <text evidence="1">This protein binds to 23S rRNA in the presence of protein L20.</text>
</comment>
<comment type="subunit">
    <text evidence="1">Part of the 50S ribosomal subunit. Contacts protein L20.</text>
</comment>
<comment type="similarity">
    <text evidence="1">Belongs to the bacterial ribosomal protein bL21 family.</text>
</comment>
<accession>A8F8P9</accession>
<reference key="1">
    <citation type="submission" date="2007-08" db="EMBL/GenBank/DDBJ databases">
        <title>Complete sequence of Thermotoga lettingae TMO.</title>
        <authorList>
            <consortium name="US DOE Joint Genome Institute"/>
            <person name="Copeland A."/>
            <person name="Lucas S."/>
            <person name="Lapidus A."/>
            <person name="Barry K."/>
            <person name="Glavina del Rio T."/>
            <person name="Dalin E."/>
            <person name="Tice H."/>
            <person name="Pitluck S."/>
            <person name="Foster B."/>
            <person name="Bruce D."/>
            <person name="Schmutz J."/>
            <person name="Larimer F."/>
            <person name="Land M."/>
            <person name="Hauser L."/>
            <person name="Kyrpides N."/>
            <person name="Mikhailova N."/>
            <person name="Nelson K."/>
            <person name="Gogarten J.P."/>
            <person name="Noll K."/>
            <person name="Richardson P."/>
        </authorList>
    </citation>
    <scope>NUCLEOTIDE SEQUENCE [LARGE SCALE GENOMIC DNA]</scope>
    <source>
        <strain>ATCC BAA-301 / DSM 14385 / NBRC 107922 / TMO</strain>
    </source>
</reference>